<gene>
    <name type="primary">FPP7</name>
    <name type="ordered locus">At2g23360</name>
    <name type="ORF">F26B6.1</name>
</gene>
<reference key="1">
    <citation type="journal article" date="1999" name="Nature">
        <title>Sequence and analysis of chromosome 2 of the plant Arabidopsis thaliana.</title>
        <authorList>
            <person name="Lin X."/>
            <person name="Kaul S."/>
            <person name="Rounsley S.D."/>
            <person name="Shea T.P."/>
            <person name="Benito M.-I."/>
            <person name="Town C.D."/>
            <person name="Fujii C.Y."/>
            <person name="Mason T.M."/>
            <person name="Bowman C.L."/>
            <person name="Barnstead M.E."/>
            <person name="Feldblyum T.V."/>
            <person name="Buell C.R."/>
            <person name="Ketchum K.A."/>
            <person name="Lee J.J."/>
            <person name="Ronning C.M."/>
            <person name="Koo H.L."/>
            <person name="Moffat K.S."/>
            <person name="Cronin L.A."/>
            <person name="Shen M."/>
            <person name="Pai G."/>
            <person name="Van Aken S."/>
            <person name="Umayam L."/>
            <person name="Tallon L.J."/>
            <person name="Gill J.E."/>
            <person name="Adams M.D."/>
            <person name="Carrera A.J."/>
            <person name="Creasy T.H."/>
            <person name="Goodman H.M."/>
            <person name="Somerville C.R."/>
            <person name="Copenhaver G.P."/>
            <person name="Preuss D."/>
            <person name="Nierman W.C."/>
            <person name="White O."/>
            <person name="Eisen J.A."/>
            <person name="Salzberg S.L."/>
            <person name="Fraser C.M."/>
            <person name="Venter J.C."/>
        </authorList>
    </citation>
    <scope>NUCLEOTIDE SEQUENCE [LARGE SCALE GENOMIC DNA]</scope>
    <source>
        <strain>cv. Columbia</strain>
    </source>
</reference>
<reference key="2">
    <citation type="journal article" date="2017" name="Plant J.">
        <title>Araport11: a complete reannotation of the Arabidopsis thaliana reference genome.</title>
        <authorList>
            <person name="Cheng C.Y."/>
            <person name="Krishnakumar V."/>
            <person name="Chan A.P."/>
            <person name="Thibaud-Nissen F."/>
            <person name="Schobel S."/>
            <person name="Town C.D."/>
        </authorList>
    </citation>
    <scope>GENOME REANNOTATION</scope>
    <source>
        <strain>cv. Columbia</strain>
    </source>
</reference>
<reference key="3">
    <citation type="journal article" date="2002" name="BMC Genomics">
        <title>Four signature motifs define the first class of structurally related large coiled-coil proteins in plants.</title>
        <authorList>
            <person name="Gindullis F."/>
            <person name="Rose A."/>
            <person name="Patel S."/>
            <person name="Meier I."/>
        </authorList>
    </citation>
    <scope>GENE FAMILY</scope>
    <scope>NOMENCLATURE</scope>
</reference>
<protein>
    <recommendedName>
        <fullName>Filament-like plant protein 7</fullName>
        <shortName>AtFPP7</shortName>
    </recommendedName>
</protein>
<comment type="subunit">
    <text evidence="1">Interacts with WPP/MAF proteins.</text>
</comment>
<comment type="similarity">
    <text evidence="4">Belongs to the FPP family.</text>
</comment>
<comment type="sequence caution" evidence="4">
    <conflict type="erroneous initiation">
        <sequence resource="EMBL-CDS" id="AAC23780"/>
    </conflict>
    <text>Truncated N-terminus.</text>
</comment>
<proteinExistence type="inferred from homology"/>
<accession>Q9SLN1</accession>
<sequence length="898" mass="101423">MDHKAWPWKKKSMEKTVVESNGEVVADKIELEHRVKSLNDKLNSVEAESNKHETEAQEAIVGWEKTKAEVASLKKKLDEALNEKHRSEERSSHTDAGLKECVQQLRFVREEQERRMHDALTKASQEYERRLIVIKTELAGSGKRLAEAEGENAQLSKALLAKNKTVEDLNRERDRIEVDFNSLVSSLESKEKENVSLRYEVRVLEKELELRNEEREFSRRTAEASHKLHLENVKKVAKLESECQRLRVLVRKRLPGPAALSKMSNEVEMLGRRRVNGSPHSPMIDSEKINNLTEQLCLLEEENKTLREALNKKVSELQFSRNMYSRTASRLLEFESHLEESSRGTNIEPSRSSNVSHEVSLASVTEFDNDDKVSCADSWASALLSELDNFKNKKEMGTSLVGTPKAAEMKLMDDFAEMEKLAMVASTIDNRPGSSPICSSDSISATGPVENESNENSSEATKTSGTVYSLNPDASPKDDIKSDSLPQSLHIVLKAVMEHKHITQRNTDEVLEDIRKALSSVNHSSFSTNHQETKTLTVEDRLDMECNISKSIHRIIDVIEGVSLKDERHVSNRESERLSGYTARVLQWKTTELSSVLQRFLQACYDLLDRKADMKKFAQELSSVLEWMVNHCFSLQDVSTMRDEIKKQFEWDESRSGSEVDIGIFRQVSEAEKLRTEDVSFLACKDQLIEDKPGNQNLSRKTVEEEANDKTASASENELKLEEKQNMRTELEIAAASEKLAECQETILNLGKQLKALTNSKETALLSETLMYDVTDKSNNLPDAQPSHETTKPEKRLTSQRSSLLDQMKAEDHNTGESKDQKPQAADKNGKGGNSSVYNETIEALEQILLSDKSKGSDSNCFAIVPQKKTGGVKSLWRKLLGRNKKGKSKKVPNPFAN</sequence>
<name>FPP7_ARATH</name>
<organism>
    <name type="scientific">Arabidopsis thaliana</name>
    <name type="common">Mouse-ear cress</name>
    <dbReference type="NCBI Taxonomy" id="3702"/>
    <lineage>
        <taxon>Eukaryota</taxon>
        <taxon>Viridiplantae</taxon>
        <taxon>Streptophyta</taxon>
        <taxon>Embryophyta</taxon>
        <taxon>Tracheophyta</taxon>
        <taxon>Spermatophyta</taxon>
        <taxon>Magnoliopsida</taxon>
        <taxon>eudicotyledons</taxon>
        <taxon>Gunneridae</taxon>
        <taxon>Pentapetalae</taxon>
        <taxon>rosids</taxon>
        <taxon>malvids</taxon>
        <taxon>Brassicales</taxon>
        <taxon>Brassicaceae</taxon>
        <taxon>Camelineae</taxon>
        <taxon>Arabidopsis</taxon>
    </lineage>
</organism>
<feature type="chain" id="PRO_0000347205" description="Filament-like plant protein 7">
    <location>
        <begin position="1"/>
        <end position="898"/>
    </location>
</feature>
<feature type="region of interest" description="Disordered" evidence="3">
    <location>
        <begin position="429"/>
        <end position="482"/>
    </location>
</feature>
<feature type="region of interest" description="Disordered" evidence="3">
    <location>
        <begin position="693"/>
        <end position="723"/>
    </location>
</feature>
<feature type="region of interest" description="Disordered" evidence="3">
    <location>
        <begin position="777"/>
        <end position="835"/>
    </location>
</feature>
<feature type="coiled-coil region" evidence="2">
    <location>
        <begin position="23"/>
        <end position="224"/>
    </location>
</feature>
<feature type="coiled-coil region" evidence="2">
    <location>
        <begin position="287"/>
        <end position="320"/>
    </location>
</feature>
<feature type="coiled-coil region" evidence="2">
    <location>
        <begin position="703"/>
        <end position="764"/>
    </location>
</feature>
<feature type="compositionally biased region" description="Low complexity" evidence="3">
    <location>
        <begin position="434"/>
        <end position="459"/>
    </location>
</feature>
<feature type="compositionally biased region" description="Polar residues" evidence="3">
    <location>
        <begin position="460"/>
        <end position="469"/>
    </location>
</feature>
<feature type="compositionally biased region" description="Basic and acidic residues" evidence="3">
    <location>
        <begin position="808"/>
        <end position="822"/>
    </location>
</feature>
<dbReference type="EMBL" id="AC003040">
    <property type="protein sequence ID" value="AAC23780.1"/>
    <property type="status" value="ALT_INIT"/>
    <property type="molecule type" value="Genomic_DNA"/>
</dbReference>
<dbReference type="EMBL" id="CP002685">
    <property type="protein sequence ID" value="AEC07447.1"/>
    <property type="molecule type" value="Genomic_DNA"/>
</dbReference>
<dbReference type="PIR" id="T01125">
    <property type="entry name" value="T01125"/>
</dbReference>
<dbReference type="RefSeq" id="NP_179917.2">
    <property type="nucleotide sequence ID" value="NM_127900.4"/>
</dbReference>
<dbReference type="SMR" id="Q9SLN1"/>
<dbReference type="FunCoup" id="Q9SLN1">
    <property type="interactions" value="108"/>
</dbReference>
<dbReference type="STRING" id="3702.Q9SLN1"/>
<dbReference type="iPTMnet" id="Q9SLN1"/>
<dbReference type="PaxDb" id="3702-AT2G23360.1"/>
<dbReference type="ProteomicsDB" id="247376"/>
<dbReference type="EnsemblPlants" id="AT2G23360.1">
    <property type="protein sequence ID" value="AT2G23360.1"/>
    <property type="gene ID" value="AT2G23360"/>
</dbReference>
<dbReference type="GeneID" id="816868"/>
<dbReference type="Gramene" id="AT2G23360.1">
    <property type="protein sequence ID" value="AT2G23360.1"/>
    <property type="gene ID" value="AT2G23360"/>
</dbReference>
<dbReference type="KEGG" id="ath:AT2G23360"/>
<dbReference type="Araport" id="AT2G23360"/>
<dbReference type="TAIR" id="AT2G23360"/>
<dbReference type="eggNOG" id="ENOG502QSY7">
    <property type="taxonomic scope" value="Eukaryota"/>
</dbReference>
<dbReference type="HOGENOM" id="CLU_008957_0_0_1"/>
<dbReference type="InParanoid" id="Q9SLN1"/>
<dbReference type="OMA" id="CVEKDAI"/>
<dbReference type="PRO" id="PR:Q9SLN1"/>
<dbReference type="Proteomes" id="UP000006548">
    <property type="component" value="Chromosome 2"/>
</dbReference>
<dbReference type="ExpressionAtlas" id="Q9SLN1">
    <property type="expression patterns" value="baseline and differential"/>
</dbReference>
<dbReference type="InterPro" id="IPR008587">
    <property type="entry name" value="FPP_plant"/>
</dbReference>
<dbReference type="PANTHER" id="PTHR31580">
    <property type="entry name" value="FILAMENT-LIKE PLANT PROTEIN 4"/>
    <property type="match status" value="1"/>
</dbReference>
<dbReference type="PANTHER" id="PTHR31580:SF22">
    <property type="entry name" value="FILAMENT-LIKE PLANT PROTEIN 7"/>
    <property type="match status" value="1"/>
</dbReference>
<dbReference type="Pfam" id="PF05911">
    <property type="entry name" value="FPP"/>
    <property type="match status" value="3"/>
</dbReference>
<evidence type="ECO:0000250" key="1"/>
<evidence type="ECO:0000255" key="2"/>
<evidence type="ECO:0000256" key="3">
    <source>
        <dbReference type="SAM" id="MobiDB-lite"/>
    </source>
</evidence>
<evidence type="ECO:0000305" key="4"/>
<keyword id="KW-0175">Coiled coil</keyword>
<keyword id="KW-1185">Reference proteome</keyword>